<protein>
    <recommendedName>
        <fullName evidence="1">Eukaryotic translation initiation factor 3 subunit I</fullName>
        <shortName evidence="1">eIF3i</shortName>
    </recommendedName>
    <alternativeName>
        <fullName evidence="1">Eukaryotic translation initiation factor 3 39 kDa subunit homolog</fullName>
        <shortName evidence="1">eIF-3 39 kDa subunit homolog</shortName>
    </alternativeName>
</protein>
<feature type="chain" id="PRO_0000365366" description="Eukaryotic translation initiation factor 3 subunit I">
    <location>
        <begin position="1"/>
        <end position="349"/>
    </location>
</feature>
<feature type="repeat" description="WD 1">
    <location>
        <begin position="8"/>
        <end position="49"/>
    </location>
</feature>
<feature type="repeat" description="WD 2">
    <location>
        <begin position="51"/>
        <end position="91"/>
    </location>
</feature>
<feature type="repeat" description="WD 3">
    <location>
        <begin position="93"/>
        <end position="135"/>
    </location>
</feature>
<feature type="repeat" description="WD 4">
    <location>
        <begin position="148"/>
        <end position="187"/>
    </location>
</feature>
<feature type="repeat" description="WD 5">
    <location>
        <begin position="197"/>
        <end position="239"/>
    </location>
</feature>
<feature type="repeat" description="WD 6">
    <location>
        <begin position="295"/>
        <end position="336"/>
    </location>
</feature>
<evidence type="ECO:0000255" key="1">
    <source>
        <dbReference type="HAMAP-Rule" id="MF_03008"/>
    </source>
</evidence>
<proteinExistence type="inferred from homology"/>
<sequence length="349" mass="38473">MRPIKLMGHERSLTQVKFNREGDLIFSVAKDSTASIWYSSNGERLGTLEGHIGTIWSIDVDADTILCATGSADLTIKLWKIETGECVQSWEMPTPVRRVAFSPDNKRLLAVTDQVMGQTGTISVFDINYEGDYTKQQSKPSLIIETRSDAKKVTVAGWSANGDFIIAGHEDGYVSKYNSSTGEFIETAQVHGIHNEEKIASITDIQFAPEDKSYIVTASKDKCSCLVDVDTLELMKVYKADAPMNTAAITPIKDFVILGGGQEARNVTTTAESQGKFEARFYHKIFIDEIGRVKGHFGPLNSIAVHPDGTGYASGGEDGFIRLHYFDKSYFDFEFDTERAERAMASSAA</sequence>
<organism>
    <name type="scientific">Debaryomyces hansenii (strain ATCC 36239 / CBS 767 / BCRC 21394 / JCM 1990 / NBRC 0083 / IGC 2968)</name>
    <name type="common">Yeast</name>
    <name type="synonym">Torulaspora hansenii</name>
    <dbReference type="NCBI Taxonomy" id="284592"/>
    <lineage>
        <taxon>Eukaryota</taxon>
        <taxon>Fungi</taxon>
        <taxon>Dikarya</taxon>
        <taxon>Ascomycota</taxon>
        <taxon>Saccharomycotina</taxon>
        <taxon>Pichiomycetes</taxon>
        <taxon>Debaryomycetaceae</taxon>
        <taxon>Debaryomyces</taxon>
    </lineage>
</organism>
<accession>Q6BSL7</accession>
<comment type="function">
    <text evidence="1">Component of the eukaryotic translation initiation factor 3 (eIF-3) complex, which is involved in protein synthesis of a specialized repertoire of mRNAs and, together with other initiation factors, stimulates binding of mRNA and methionyl-tRNAi to the 40S ribosome. The eIF-3 complex specifically targets and initiates translation of a subset of mRNAs involved in cell proliferation.</text>
</comment>
<comment type="subunit">
    <text evidence="1">Component of the eukaryotic translation initiation factor 3 (eIF-3) complex.</text>
</comment>
<comment type="subcellular location">
    <subcellularLocation>
        <location evidence="1">Cytoplasm</location>
    </subcellularLocation>
</comment>
<comment type="similarity">
    <text evidence="1">Belongs to the eIF-3 subunit I family.</text>
</comment>
<reference key="1">
    <citation type="journal article" date="2004" name="Nature">
        <title>Genome evolution in yeasts.</title>
        <authorList>
            <person name="Dujon B."/>
            <person name="Sherman D."/>
            <person name="Fischer G."/>
            <person name="Durrens P."/>
            <person name="Casaregola S."/>
            <person name="Lafontaine I."/>
            <person name="de Montigny J."/>
            <person name="Marck C."/>
            <person name="Neuveglise C."/>
            <person name="Talla E."/>
            <person name="Goffard N."/>
            <person name="Frangeul L."/>
            <person name="Aigle M."/>
            <person name="Anthouard V."/>
            <person name="Babour A."/>
            <person name="Barbe V."/>
            <person name="Barnay S."/>
            <person name="Blanchin S."/>
            <person name="Beckerich J.-M."/>
            <person name="Beyne E."/>
            <person name="Bleykasten C."/>
            <person name="Boisrame A."/>
            <person name="Boyer J."/>
            <person name="Cattolico L."/>
            <person name="Confanioleri F."/>
            <person name="de Daruvar A."/>
            <person name="Despons L."/>
            <person name="Fabre E."/>
            <person name="Fairhead C."/>
            <person name="Ferry-Dumazet H."/>
            <person name="Groppi A."/>
            <person name="Hantraye F."/>
            <person name="Hennequin C."/>
            <person name="Jauniaux N."/>
            <person name="Joyet P."/>
            <person name="Kachouri R."/>
            <person name="Kerrest A."/>
            <person name="Koszul R."/>
            <person name="Lemaire M."/>
            <person name="Lesur I."/>
            <person name="Ma L."/>
            <person name="Muller H."/>
            <person name="Nicaud J.-M."/>
            <person name="Nikolski M."/>
            <person name="Oztas S."/>
            <person name="Ozier-Kalogeropoulos O."/>
            <person name="Pellenz S."/>
            <person name="Potier S."/>
            <person name="Richard G.-F."/>
            <person name="Straub M.-L."/>
            <person name="Suleau A."/>
            <person name="Swennen D."/>
            <person name="Tekaia F."/>
            <person name="Wesolowski-Louvel M."/>
            <person name="Westhof E."/>
            <person name="Wirth B."/>
            <person name="Zeniou-Meyer M."/>
            <person name="Zivanovic Y."/>
            <person name="Bolotin-Fukuhara M."/>
            <person name="Thierry A."/>
            <person name="Bouchier C."/>
            <person name="Caudron B."/>
            <person name="Scarpelli C."/>
            <person name="Gaillardin C."/>
            <person name="Weissenbach J."/>
            <person name="Wincker P."/>
            <person name="Souciet J.-L."/>
        </authorList>
    </citation>
    <scope>NUCLEOTIDE SEQUENCE [LARGE SCALE GENOMIC DNA]</scope>
    <source>
        <strain>ATCC 36239 / CBS 767 / BCRC 21394 / JCM 1990 / NBRC 0083 / IGC 2968</strain>
    </source>
</reference>
<keyword id="KW-0963">Cytoplasm</keyword>
<keyword id="KW-0396">Initiation factor</keyword>
<keyword id="KW-0648">Protein biosynthesis</keyword>
<keyword id="KW-1185">Reference proteome</keyword>
<keyword id="KW-0677">Repeat</keyword>
<keyword id="KW-0853">WD repeat</keyword>
<dbReference type="EMBL" id="CR382136">
    <property type="protein sequence ID" value="CAG86947.1"/>
    <property type="molecule type" value="Genomic_DNA"/>
</dbReference>
<dbReference type="RefSeq" id="XP_458803.1">
    <property type="nucleotide sequence ID" value="XM_458803.1"/>
</dbReference>
<dbReference type="SMR" id="Q6BSL7"/>
<dbReference type="FunCoup" id="Q6BSL7">
    <property type="interactions" value="1152"/>
</dbReference>
<dbReference type="STRING" id="284592.Q6BSL7"/>
<dbReference type="GeneID" id="2901283"/>
<dbReference type="KEGG" id="dha:DEHA2D07898g"/>
<dbReference type="VEuPathDB" id="FungiDB:DEHA2D07898g"/>
<dbReference type="eggNOG" id="KOG0643">
    <property type="taxonomic scope" value="Eukaryota"/>
</dbReference>
<dbReference type="HOGENOM" id="CLU_043845_0_1_1"/>
<dbReference type="InParanoid" id="Q6BSL7"/>
<dbReference type="OMA" id="VWFSHNG"/>
<dbReference type="OrthoDB" id="24966at2759"/>
<dbReference type="Proteomes" id="UP000000599">
    <property type="component" value="Chromosome D"/>
</dbReference>
<dbReference type="GO" id="GO:0016282">
    <property type="term" value="C:eukaryotic 43S preinitiation complex"/>
    <property type="evidence" value="ECO:0007669"/>
    <property type="project" value="UniProtKB-UniRule"/>
</dbReference>
<dbReference type="GO" id="GO:0033290">
    <property type="term" value="C:eukaryotic 48S preinitiation complex"/>
    <property type="evidence" value="ECO:0007669"/>
    <property type="project" value="UniProtKB-UniRule"/>
</dbReference>
<dbReference type="GO" id="GO:0071540">
    <property type="term" value="C:eukaryotic translation initiation factor 3 complex, eIF3e"/>
    <property type="evidence" value="ECO:0007669"/>
    <property type="project" value="EnsemblFungi"/>
</dbReference>
<dbReference type="GO" id="GO:0071541">
    <property type="term" value="C:eukaryotic translation initiation factor 3 complex, eIF3m"/>
    <property type="evidence" value="ECO:0007669"/>
    <property type="project" value="EnsemblFungi"/>
</dbReference>
<dbReference type="GO" id="GO:0034399">
    <property type="term" value="C:nuclear periphery"/>
    <property type="evidence" value="ECO:0007669"/>
    <property type="project" value="EnsemblFungi"/>
</dbReference>
<dbReference type="GO" id="GO:0003723">
    <property type="term" value="F:RNA binding"/>
    <property type="evidence" value="ECO:0007669"/>
    <property type="project" value="TreeGrafter"/>
</dbReference>
<dbReference type="GO" id="GO:0003743">
    <property type="term" value="F:translation initiation factor activity"/>
    <property type="evidence" value="ECO:0007669"/>
    <property type="project" value="UniProtKB-UniRule"/>
</dbReference>
<dbReference type="GO" id="GO:0001732">
    <property type="term" value="P:formation of cytoplasmic translation initiation complex"/>
    <property type="evidence" value="ECO:0007669"/>
    <property type="project" value="UniProtKB-UniRule"/>
</dbReference>
<dbReference type="FunFam" id="2.130.10.10:FF:000127">
    <property type="entry name" value="Eukaryotic translation initiation factor 3 subunit I"/>
    <property type="match status" value="1"/>
</dbReference>
<dbReference type="Gene3D" id="2.130.10.10">
    <property type="entry name" value="YVTN repeat-like/Quinoprotein amine dehydrogenase"/>
    <property type="match status" value="1"/>
</dbReference>
<dbReference type="HAMAP" id="MF_03008">
    <property type="entry name" value="eIF3i"/>
    <property type="match status" value="1"/>
</dbReference>
<dbReference type="InterPro" id="IPR027525">
    <property type="entry name" value="eIF3i"/>
</dbReference>
<dbReference type="InterPro" id="IPR015943">
    <property type="entry name" value="WD40/YVTN_repeat-like_dom_sf"/>
</dbReference>
<dbReference type="InterPro" id="IPR036322">
    <property type="entry name" value="WD40_repeat_dom_sf"/>
</dbReference>
<dbReference type="InterPro" id="IPR001680">
    <property type="entry name" value="WD40_rpt"/>
</dbReference>
<dbReference type="PANTHER" id="PTHR19877">
    <property type="entry name" value="EUKARYOTIC TRANSLATION INITIATION FACTOR 3 SUBUNIT I"/>
    <property type="match status" value="1"/>
</dbReference>
<dbReference type="PANTHER" id="PTHR19877:SF1">
    <property type="entry name" value="EUKARYOTIC TRANSLATION INITIATION FACTOR 3 SUBUNIT I"/>
    <property type="match status" value="1"/>
</dbReference>
<dbReference type="Pfam" id="PF24805">
    <property type="entry name" value="EIF3I"/>
    <property type="match status" value="1"/>
</dbReference>
<dbReference type="SMART" id="SM00320">
    <property type="entry name" value="WD40"/>
    <property type="match status" value="6"/>
</dbReference>
<dbReference type="SUPFAM" id="SSF50978">
    <property type="entry name" value="WD40 repeat-like"/>
    <property type="match status" value="1"/>
</dbReference>
<dbReference type="PROSITE" id="PS50082">
    <property type="entry name" value="WD_REPEATS_2"/>
    <property type="match status" value="3"/>
</dbReference>
<dbReference type="PROSITE" id="PS50294">
    <property type="entry name" value="WD_REPEATS_REGION"/>
    <property type="match status" value="1"/>
</dbReference>
<gene>
    <name evidence="1" type="primary">TIF34</name>
    <name type="ordered locus">DEHA2D07898g</name>
    <name type="ORF">DEHA0D08624g</name>
</gene>
<name>EIF3I_DEBHA</name>